<evidence type="ECO:0000255" key="1"/>
<evidence type="ECO:0000255" key="2">
    <source>
        <dbReference type="PROSITE-ProRule" id="PRU00521"/>
    </source>
</evidence>
<evidence type="ECO:0000305" key="3"/>
<gene>
    <name type="primary">OR11H4</name>
</gene>
<protein>
    <recommendedName>
        <fullName>Olfactory receptor 11H4</fullName>
    </recommendedName>
    <alternativeName>
        <fullName>Olfactory receptor OR14-36</fullName>
    </alternativeName>
</protein>
<dbReference type="EMBL" id="AB065887">
    <property type="protein sequence ID" value="BAC06104.1"/>
    <property type="molecule type" value="Genomic_DNA"/>
</dbReference>
<dbReference type="EMBL" id="CH471078">
    <property type="protein sequence ID" value="EAW66484.1"/>
    <property type="molecule type" value="Genomic_DNA"/>
</dbReference>
<dbReference type="EMBL" id="BC137054">
    <property type="protein sequence ID" value="AAI37055.1"/>
    <property type="molecule type" value="mRNA"/>
</dbReference>
<dbReference type="EMBL" id="BC137055">
    <property type="protein sequence ID" value="AAI37056.1"/>
    <property type="molecule type" value="mRNA"/>
</dbReference>
<dbReference type="EMBL" id="BK004455">
    <property type="protein sequence ID" value="DAA04853.1"/>
    <property type="molecule type" value="Genomic_DNA"/>
</dbReference>
<dbReference type="RefSeq" id="NP_001004479.1">
    <property type="nucleotide sequence ID" value="NM_001004479.1"/>
</dbReference>
<dbReference type="SMR" id="Q8NGC9"/>
<dbReference type="FunCoup" id="Q8NGC9">
    <property type="interactions" value="469"/>
</dbReference>
<dbReference type="STRING" id="9606.ENSP00000318997"/>
<dbReference type="GlyCosmos" id="Q8NGC9">
    <property type="glycosylation" value="1 site, No reported glycans"/>
</dbReference>
<dbReference type="GlyGen" id="Q8NGC9">
    <property type="glycosylation" value="1 site"/>
</dbReference>
<dbReference type="iPTMnet" id="Q8NGC9"/>
<dbReference type="PhosphoSitePlus" id="Q8NGC9"/>
<dbReference type="BioMuta" id="OR11H4"/>
<dbReference type="DMDM" id="38372669"/>
<dbReference type="PaxDb" id="9606-ENSP00000318997"/>
<dbReference type="Antibodypedia" id="22003">
    <property type="antibodies" value="28 antibodies from 13 providers"/>
</dbReference>
<dbReference type="DNASU" id="390442"/>
<dbReference type="GeneID" id="390442"/>
<dbReference type="KEGG" id="hsa:390442"/>
<dbReference type="UCSC" id="uc010tld.3">
    <property type="organism name" value="human"/>
</dbReference>
<dbReference type="AGR" id="HGNC:15347"/>
<dbReference type="CTD" id="390442"/>
<dbReference type="GeneCards" id="OR11H4"/>
<dbReference type="HGNC" id="HGNC:15347">
    <property type="gene designation" value="OR11H4"/>
</dbReference>
<dbReference type="neXtProt" id="NX_Q8NGC9"/>
<dbReference type="PharmGKB" id="PA32016"/>
<dbReference type="VEuPathDB" id="HostDB:ENSG00000176198"/>
<dbReference type="eggNOG" id="ENOG502QVH7">
    <property type="taxonomic scope" value="Eukaryota"/>
</dbReference>
<dbReference type="HOGENOM" id="CLU_012526_8_1_1"/>
<dbReference type="InParanoid" id="Q8NGC9"/>
<dbReference type="OMA" id="VYSIMTP"/>
<dbReference type="OrthoDB" id="6151005at2759"/>
<dbReference type="PAN-GO" id="Q8NGC9">
    <property type="GO annotations" value="6 GO annotations based on evolutionary models"/>
</dbReference>
<dbReference type="PhylomeDB" id="Q8NGC9"/>
<dbReference type="TreeFam" id="TF338968"/>
<dbReference type="PathwayCommons" id="Q8NGC9"/>
<dbReference type="Reactome" id="R-HSA-381753">
    <property type="pathway name" value="Olfactory Signaling Pathway"/>
</dbReference>
<dbReference type="Reactome" id="R-HSA-9752946">
    <property type="pathway name" value="Expression and translocation of olfactory receptors"/>
</dbReference>
<dbReference type="BioGRID-ORCS" id="390442">
    <property type="hits" value="29 hits in 755 CRISPR screens"/>
</dbReference>
<dbReference type="GeneWiki" id="OR11H4"/>
<dbReference type="GenomeRNAi" id="390442"/>
<dbReference type="Pharos" id="Q8NGC9">
    <property type="development level" value="Tdark"/>
</dbReference>
<dbReference type="PRO" id="PR:Q8NGC9"/>
<dbReference type="Proteomes" id="UP000005640">
    <property type="component" value="Chromosome 14"/>
</dbReference>
<dbReference type="RNAct" id="Q8NGC9">
    <property type="molecule type" value="protein"/>
</dbReference>
<dbReference type="GO" id="GO:0005886">
    <property type="term" value="C:plasma membrane"/>
    <property type="evidence" value="ECO:0000304"/>
    <property type="project" value="Reactome"/>
</dbReference>
<dbReference type="GO" id="GO:0004930">
    <property type="term" value="F:G protein-coupled receptor activity"/>
    <property type="evidence" value="ECO:0007669"/>
    <property type="project" value="UniProtKB-KW"/>
</dbReference>
<dbReference type="GO" id="GO:0004984">
    <property type="term" value="F:olfactory receptor activity"/>
    <property type="evidence" value="ECO:0007669"/>
    <property type="project" value="InterPro"/>
</dbReference>
<dbReference type="CDD" id="cd15913">
    <property type="entry name" value="7tmA_OR11G-like"/>
    <property type="match status" value="1"/>
</dbReference>
<dbReference type="FunFam" id="1.10.1220.70:FF:000001">
    <property type="entry name" value="Olfactory receptor"/>
    <property type="match status" value="1"/>
</dbReference>
<dbReference type="FunFam" id="1.20.1070.10:FF:000001">
    <property type="entry name" value="Olfactory receptor"/>
    <property type="match status" value="1"/>
</dbReference>
<dbReference type="Gene3D" id="1.20.1070.10">
    <property type="entry name" value="Rhodopsin 7-helix transmembrane proteins"/>
    <property type="match status" value="1"/>
</dbReference>
<dbReference type="InterPro" id="IPR000276">
    <property type="entry name" value="GPCR_Rhodpsn"/>
</dbReference>
<dbReference type="InterPro" id="IPR017452">
    <property type="entry name" value="GPCR_Rhodpsn_7TM"/>
</dbReference>
<dbReference type="InterPro" id="IPR000725">
    <property type="entry name" value="Olfact_rcpt"/>
</dbReference>
<dbReference type="InterPro" id="IPR050939">
    <property type="entry name" value="Olfactory_GPCR1"/>
</dbReference>
<dbReference type="PANTHER" id="PTHR24242">
    <property type="entry name" value="G-PROTEIN COUPLED RECEPTOR"/>
    <property type="match status" value="1"/>
</dbReference>
<dbReference type="PANTHER" id="PTHR24242:SF381">
    <property type="entry name" value="OLFACTORY RECEPTOR 11H4"/>
    <property type="match status" value="1"/>
</dbReference>
<dbReference type="Pfam" id="PF13853">
    <property type="entry name" value="7tm_4"/>
    <property type="match status" value="1"/>
</dbReference>
<dbReference type="PRINTS" id="PR00237">
    <property type="entry name" value="GPCRRHODOPSN"/>
</dbReference>
<dbReference type="PRINTS" id="PR00245">
    <property type="entry name" value="OLFACTORYR"/>
</dbReference>
<dbReference type="SUPFAM" id="SSF81321">
    <property type="entry name" value="Family A G protein-coupled receptor-like"/>
    <property type="match status" value="1"/>
</dbReference>
<dbReference type="PROSITE" id="PS00237">
    <property type="entry name" value="G_PROTEIN_RECEP_F1_1"/>
    <property type="match status" value="1"/>
</dbReference>
<dbReference type="PROSITE" id="PS50262">
    <property type="entry name" value="G_PROTEIN_RECEP_F1_2"/>
    <property type="match status" value="1"/>
</dbReference>
<name>O11H4_HUMAN</name>
<accession>Q8NGC9</accession>
<accession>B2RNQ4</accession>
<accession>Q6IF07</accession>
<proteinExistence type="evidence at transcript level"/>
<feature type="chain" id="PRO_0000150725" description="Olfactory receptor 11H4">
    <location>
        <begin position="1"/>
        <end position="324"/>
    </location>
</feature>
<feature type="topological domain" description="Extracellular" evidence="1">
    <location>
        <begin position="1"/>
        <end position="35"/>
    </location>
</feature>
<feature type="transmembrane region" description="Helical; Name=1" evidence="1">
    <location>
        <begin position="36"/>
        <end position="56"/>
    </location>
</feature>
<feature type="topological domain" description="Cytoplasmic" evidence="1">
    <location>
        <begin position="57"/>
        <end position="64"/>
    </location>
</feature>
<feature type="transmembrane region" description="Helical; Name=2" evidence="1">
    <location>
        <begin position="65"/>
        <end position="85"/>
    </location>
</feature>
<feature type="topological domain" description="Extracellular" evidence="1">
    <location>
        <begin position="86"/>
        <end position="109"/>
    </location>
</feature>
<feature type="transmembrane region" description="Helical; Name=3" evidence="1">
    <location>
        <begin position="110"/>
        <end position="130"/>
    </location>
</feature>
<feature type="topological domain" description="Cytoplasmic" evidence="1">
    <location>
        <begin position="131"/>
        <end position="149"/>
    </location>
</feature>
<feature type="transmembrane region" description="Helical; Name=4" evidence="1">
    <location>
        <begin position="150"/>
        <end position="170"/>
    </location>
</feature>
<feature type="topological domain" description="Extracellular" evidence="1">
    <location>
        <begin position="171"/>
        <end position="207"/>
    </location>
</feature>
<feature type="transmembrane region" description="Helical; Name=5" evidence="1">
    <location>
        <begin position="208"/>
        <end position="227"/>
    </location>
</feature>
<feature type="topological domain" description="Cytoplasmic" evidence="1">
    <location>
        <begin position="228"/>
        <end position="247"/>
    </location>
</feature>
<feature type="transmembrane region" description="Helical; Name=6" evidence="1">
    <location>
        <begin position="248"/>
        <end position="268"/>
    </location>
</feature>
<feature type="topological domain" description="Extracellular" evidence="1">
    <location>
        <begin position="269"/>
        <end position="281"/>
    </location>
</feature>
<feature type="transmembrane region" description="Helical; Name=7" evidence="1">
    <location>
        <begin position="282"/>
        <end position="302"/>
    </location>
</feature>
<feature type="topological domain" description="Cytoplasmic" evidence="1">
    <location>
        <begin position="303"/>
        <end position="324"/>
    </location>
</feature>
<feature type="glycosylation site" description="N-linked (GlcNAc...) asparagine" evidence="1">
    <location>
        <position position="12"/>
    </location>
</feature>
<feature type="disulfide bond" evidence="2">
    <location>
        <begin position="107"/>
        <end position="199"/>
    </location>
</feature>
<feature type="sequence variant" id="VAR_034298" description="In dbSNP:rs17277270.">
    <original>T</original>
    <variation>S</variation>
    <location>
        <position position="301"/>
    </location>
</feature>
<reference key="1">
    <citation type="submission" date="2001-07" db="EMBL/GenBank/DDBJ databases">
        <title>Genome-wide discovery and analysis of human seven transmembrane helix receptor genes.</title>
        <authorList>
            <person name="Suwa M."/>
            <person name="Sato T."/>
            <person name="Okouchi I."/>
            <person name="Arita M."/>
            <person name="Futami K."/>
            <person name="Matsumoto S."/>
            <person name="Tsutsumi S."/>
            <person name="Aburatani H."/>
            <person name="Asai K."/>
            <person name="Akiyama Y."/>
        </authorList>
    </citation>
    <scope>NUCLEOTIDE SEQUENCE [GENOMIC DNA]</scope>
</reference>
<reference key="2">
    <citation type="submission" date="2005-09" db="EMBL/GenBank/DDBJ databases">
        <authorList>
            <person name="Mural R.J."/>
            <person name="Istrail S."/>
            <person name="Sutton G.G."/>
            <person name="Florea L."/>
            <person name="Halpern A.L."/>
            <person name="Mobarry C.M."/>
            <person name="Lippert R."/>
            <person name="Walenz B."/>
            <person name="Shatkay H."/>
            <person name="Dew I."/>
            <person name="Miller J.R."/>
            <person name="Flanigan M.J."/>
            <person name="Edwards N.J."/>
            <person name="Bolanos R."/>
            <person name="Fasulo D."/>
            <person name="Halldorsson B.V."/>
            <person name="Hannenhalli S."/>
            <person name="Turner R."/>
            <person name="Yooseph S."/>
            <person name="Lu F."/>
            <person name="Nusskern D.R."/>
            <person name="Shue B.C."/>
            <person name="Zheng X.H."/>
            <person name="Zhong F."/>
            <person name="Delcher A.L."/>
            <person name="Huson D.H."/>
            <person name="Kravitz S.A."/>
            <person name="Mouchard L."/>
            <person name="Reinert K."/>
            <person name="Remington K.A."/>
            <person name="Clark A.G."/>
            <person name="Waterman M.S."/>
            <person name="Eichler E.E."/>
            <person name="Adams M.D."/>
            <person name="Hunkapiller M.W."/>
            <person name="Myers E.W."/>
            <person name="Venter J.C."/>
        </authorList>
    </citation>
    <scope>NUCLEOTIDE SEQUENCE [LARGE SCALE GENOMIC DNA]</scope>
</reference>
<reference key="3">
    <citation type="journal article" date="2004" name="Genome Res.">
        <title>The status, quality, and expansion of the NIH full-length cDNA project: the Mammalian Gene Collection (MGC).</title>
        <authorList>
            <consortium name="The MGC Project Team"/>
        </authorList>
    </citation>
    <scope>NUCLEOTIDE SEQUENCE [LARGE SCALE MRNA]</scope>
</reference>
<reference key="4">
    <citation type="journal article" date="2004" name="Proc. Natl. Acad. Sci. U.S.A.">
        <title>The human olfactory receptor gene family.</title>
        <authorList>
            <person name="Malnic B."/>
            <person name="Godfrey P.A."/>
            <person name="Buck L.B."/>
        </authorList>
    </citation>
    <scope>IDENTIFICATION</scope>
</reference>
<reference key="5">
    <citation type="journal article" date="2004" name="Proc. Natl. Acad. Sci. U.S.A.">
        <authorList>
            <person name="Malnic B."/>
            <person name="Godfrey P.A."/>
            <person name="Buck L.B."/>
        </authorList>
    </citation>
    <scope>ERRATUM OF PUBMED:14983052</scope>
</reference>
<keyword id="KW-1003">Cell membrane</keyword>
<keyword id="KW-1015">Disulfide bond</keyword>
<keyword id="KW-0297">G-protein coupled receptor</keyword>
<keyword id="KW-0325">Glycoprotein</keyword>
<keyword id="KW-0472">Membrane</keyword>
<keyword id="KW-0552">Olfaction</keyword>
<keyword id="KW-0675">Receptor</keyword>
<keyword id="KW-1185">Reference proteome</keyword>
<keyword id="KW-0716">Sensory transduction</keyword>
<keyword id="KW-0807">Transducer</keyword>
<keyword id="KW-0812">Transmembrane</keyword>
<keyword id="KW-1133">Transmembrane helix</keyword>
<sequence length="324" mass="36886">MSFFFVDLRPMNRSATHIVTEFILLGFPGCWKIQIFLFSLFLVIYVLTLLGNGAIIYAVRCNPLLHTPMYFLLGNFAFLEIWYVSSTIPNMLVNILSKTKAISFSGCFLQFYFFFSLGTTECLFLAVMAYDRYLAICHPLQYPAIMTVRFCGKLVSFCWLIGFLGYPIPIFYISQLPFCGPNIIDHFLCDMDPLMALSCAPAPITECIFYTQSSLVLFFTSMYILRSYILLLTAVFQVPSAAGRRKAFSTCGSHLVVVSLFYGTVMVMYVSPTYGIPTLLQKILTLVYSVTTPLFNPLIYTLRNKDMKLALRNVLFGMRIRQNS</sequence>
<comment type="function">
    <text evidence="3">Odorant receptor.</text>
</comment>
<comment type="subcellular location">
    <subcellularLocation>
        <location>Cell membrane</location>
        <topology>Multi-pass membrane protein</topology>
    </subcellularLocation>
</comment>
<comment type="similarity">
    <text evidence="2">Belongs to the G-protein coupled receptor 1 family.</text>
</comment>
<comment type="online information" name="Human Olfactory Receptor Data Exploratorium (HORDE)">
    <link uri="http://genome.weizmann.ac.il/horde/card/index/symbol:OR11H4"/>
</comment>
<organism>
    <name type="scientific">Homo sapiens</name>
    <name type="common">Human</name>
    <dbReference type="NCBI Taxonomy" id="9606"/>
    <lineage>
        <taxon>Eukaryota</taxon>
        <taxon>Metazoa</taxon>
        <taxon>Chordata</taxon>
        <taxon>Craniata</taxon>
        <taxon>Vertebrata</taxon>
        <taxon>Euteleostomi</taxon>
        <taxon>Mammalia</taxon>
        <taxon>Eutheria</taxon>
        <taxon>Euarchontoglires</taxon>
        <taxon>Primates</taxon>
        <taxon>Haplorrhini</taxon>
        <taxon>Catarrhini</taxon>
        <taxon>Hominidae</taxon>
        <taxon>Homo</taxon>
    </lineage>
</organism>